<gene>
    <name type="primary">ODVP6E</name>
</gene>
<accession>P41718</accession>
<evidence type="ECO:0000250" key="1"/>
<evidence type="ECO:0000255" key="2"/>
<evidence type="ECO:0000305" key="3"/>
<sequence>MSTFFTNLRRVNKVYPNQATFLTDNTRLLTTTPAGFTNVLRAPSTRNLGNGRFEPGYNLSNNQFVSAGDINRITRGNDVPRIRNVFQGISDPQIGSLNQLRRADNVPDAGLHVKRTRSDAVKQNFPETNVRSADGVDRALQQNPRLNTYLQGAKTAGVGVLLAGGAYLTFSAATLVQDIIQALNNTGGSYYVRGADGGDTADACLLLSRTCQRDPNMNTSDVVICNHDPLIADTAQLQAICSGFNYQQEQTVCRQSDPAADPDSPQFVDVSDLLPGQTIMCIEPYNLGDLIGDLGLDHLLGEDGLVGKSSNSSDSVSNKLMPLIWLIGAVLFLGLIIYLIYRFVIKGGAGAAGAARAPPVIVLPPPPTQQTYNSTKQQI</sequence>
<dbReference type="EMBL" id="L04945">
    <property type="protein sequence ID" value="AAA46698.1"/>
    <property type="molecule type" value="Genomic_DNA"/>
</dbReference>
<dbReference type="RefSeq" id="NP_848452.1">
    <property type="nucleotide sequence ID" value="NC_004778.3"/>
</dbReference>
<dbReference type="SMR" id="P41718"/>
<dbReference type="GlyCosmos" id="P41718">
    <property type="glycosylation" value="1 site, No reported glycans"/>
</dbReference>
<dbReference type="KEGG" id="vg:1482724"/>
<dbReference type="OrthoDB" id="8860at10239"/>
<dbReference type="GO" id="GO:0016020">
    <property type="term" value="C:membrane"/>
    <property type="evidence" value="ECO:0007669"/>
    <property type="project" value="UniProtKB-KW"/>
</dbReference>
<dbReference type="GO" id="GO:0019031">
    <property type="term" value="C:viral envelope"/>
    <property type="evidence" value="ECO:0007669"/>
    <property type="project" value="UniProtKB-KW"/>
</dbReference>
<dbReference type="GO" id="GO:0055036">
    <property type="term" value="C:virion membrane"/>
    <property type="evidence" value="ECO:0007669"/>
    <property type="project" value="UniProtKB-SubCell"/>
</dbReference>
<dbReference type="InterPro" id="IPR006733">
    <property type="entry name" value="Baculo_ODV-E56"/>
</dbReference>
<dbReference type="Pfam" id="PF04639">
    <property type="entry name" value="Baculo_E56"/>
    <property type="match status" value="1"/>
</dbReference>
<organism>
    <name type="scientific">Choristoneura fumiferana nuclear polyhedrosis virus</name>
    <name type="common">CfMNPV</name>
    <dbReference type="NCBI Taxonomy" id="208973"/>
    <lineage>
        <taxon>Viruses</taxon>
        <taxon>Viruses incertae sedis</taxon>
        <taxon>Naldaviricetes</taxon>
        <taxon>Lefavirales</taxon>
        <taxon>Baculoviridae</taxon>
        <taxon>Alphabaculovirus</taxon>
        <taxon>Alphabaculovirus chofumiferanae</taxon>
    </lineage>
</organism>
<name>OE56_NPVCF</name>
<comment type="function">
    <text evidence="1">Structural protein that is specific for occlusion-derived virus (ODV) envelopes but not of budded virus (BV).</text>
</comment>
<comment type="subcellular location">
    <subcellularLocation>
        <location evidence="3">Virion membrane</location>
        <topology evidence="3">Multi-pass membrane protein</topology>
    </subcellularLocation>
    <text evidence="1">Localized to the envelope region of preoccluded bundles of virions.</text>
</comment>
<comment type="miscellaneous">
    <text evidence="1">Expressed late in infection.</text>
</comment>
<comment type="similarity">
    <text evidence="3">Belongs to the baculoviridae E56 family.</text>
</comment>
<organismHost>
    <name type="scientific">Choristoneura fumiferana</name>
    <name type="common">Spruce budworm moth</name>
    <name type="synonym">Archips fumiferana</name>
    <dbReference type="NCBI Taxonomy" id="7141"/>
</organismHost>
<protein>
    <recommendedName>
        <fullName>Occlusion-derived virus envelope protein E56</fullName>
        <shortName>ODV-E56</shortName>
    </recommendedName>
    <alternativeName>
        <fullName>ODVP-6E</fullName>
    </alternativeName>
</protein>
<keyword id="KW-0325">Glycoprotein</keyword>
<keyword id="KW-0426">Late protein</keyword>
<keyword id="KW-0472">Membrane</keyword>
<keyword id="KW-0812">Transmembrane</keyword>
<keyword id="KW-1133">Transmembrane helix</keyword>
<keyword id="KW-0261">Viral envelope protein</keyword>
<keyword id="KW-0946">Virion</keyword>
<reference key="1">
    <citation type="submission" date="1992-10" db="EMBL/GenBank/DDBJ databases">
        <authorList>
            <person name="Kuzio J."/>
            <person name="Schodella E."/>
            <person name="Faulkner P."/>
        </authorList>
    </citation>
    <scope>NUCLEOTIDE SEQUENCE [GENOMIC DNA]</scope>
</reference>
<feature type="chain" id="PRO_0000132926" description="Occlusion-derived virus envelope protein E56">
    <location>
        <begin position="1"/>
        <end position="379"/>
    </location>
</feature>
<feature type="transmembrane region" description="Helical" evidence="2">
    <location>
        <begin position="156"/>
        <end position="176"/>
    </location>
</feature>
<feature type="transmembrane region" description="Helical" evidence="2">
    <location>
        <begin position="320"/>
        <end position="340"/>
    </location>
</feature>
<feature type="glycosylation site" description="N-linked (GlcNAc...) asparagine; by host" evidence="2">
    <location>
        <position position="184"/>
    </location>
</feature>
<proteinExistence type="inferred from homology"/>